<feature type="chain" id="PRO_0000389167" description="Non-classical export protein 1">
    <location>
        <begin position="1"/>
        <end position="58"/>
    </location>
</feature>
<feature type="transmembrane region" description="Helical" evidence="2">
    <location>
        <begin position="10"/>
        <end position="27"/>
    </location>
</feature>
<proteinExistence type="evidence at transcript level"/>
<accession>C6Y4B6</accession>
<protein>
    <recommendedName>
        <fullName>Non-classical export protein 1</fullName>
    </recommendedName>
</protein>
<name>NCE1_SCHPO</name>
<gene>
    <name type="primary">nce101</name>
    <name type="ORF">SPAC12G12.17</name>
</gene>
<comment type="function">
    <text evidence="1">Involved in a novel pathway of export of proteins that lack a cleavable signal sequence. May be part of the export machinery or may also be a substrate for non-classical export (By similarity).</text>
</comment>
<comment type="subcellular location">
    <subcellularLocation>
        <location evidence="3">Membrane</location>
        <topology evidence="3">Single-pass membrane protein</topology>
    </subcellularLocation>
</comment>
<comment type="similarity">
    <text evidence="3">Belongs to the NCE101 family.</text>
</comment>
<evidence type="ECO:0000250" key="1"/>
<evidence type="ECO:0000255" key="2"/>
<evidence type="ECO:0000305" key="3"/>
<sequence>MSQPYLISKWMDPLFGIFVGTYGYYLYEKEHRPRGRSLRELALRKWNKQAVSQQSMKN</sequence>
<dbReference type="EMBL" id="CU329670">
    <property type="protein sequence ID" value="CBA11489.1"/>
    <property type="molecule type" value="Genomic_DNA"/>
</dbReference>
<dbReference type="RefSeq" id="XP_002742498.1">
    <property type="nucleotide sequence ID" value="XM_002742452.2"/>
</dbReference>
<dbReference type="SMR" id="C6Y4B6"/>
<dbReference type="FunCoup" id="C6Y4B6">
    <property type="interactions" value="26"/>
</dbReference>
<dbReference type="PaxDb" id="4896-SPAC12G12.17.1"/>
<dbReference type="EnsemblFungi" id="SPAC12G12.17.1">
    <property type="protein sequence ID" value="SPAC12G12.17.1:pep"/>
    <property type="gene ID" value="SPAC12G12.17"/>
</dbReference>
<dbReference type="PomBase" id="SPAC12G12.17">
    <property type="gene designation" value="nce101"/>
</dbReference>
<dbReference type="VEuPathDB" id="FungiDB:SPAC12G12.17"/>
<dbReference type="HOGENOM" id="CLU_188578_1_1_1"/>
<dbReference type="InParanoid" id="C6Y4B6"/>
<dbReference type="OMA" id="MQYPYLI"/>
<dbReference type="PRO" id="PR:C6Y4B6"/>
<dbReference type="Proteomes" id="UP000002485">
    <property type="component" value="Chromosome I"/>
</dbReference>
<dbReference type="GO" id="GO:0016020">
    <property type="term" value="C:membrane"/>
    <property type="evidence" value="ECO:0007669"/>
    <property type="project" value="UniProtKB-SubCell"/>
</dbReference>
<dbReference type="GO" id="GO:0006887">
    <property type="term" value="P:exocytosis"/>
    <property type="evidence" value="ECO:0000266"/>
    <property type="project" value="PomBase"/>
</dbReference>
<dbReference type="GO" id="GO:0009306">
    <property type="term" value="P:protein secretion"/>
    <property type="evidence" value="ECO:0000318"/>
    <property type="project" value="GO_Central"/>
</dbReference>
<dbReference type="InterPro" id="IPR024242">
    <property type="entry name" value="NCE101"/>
</dbReference>
<dbReference type="PANTHER" id="PTHR28011">
    <property type="entry name" value="NON-CLASSICAL EXPORT PROTEIN 1"/>
    <property type="match status" value="1"/>
</dbReference>
<dbReference type="PANTHER" id="PTHR28011:SF1">
    <property type="entry name" value="NON-CLASSICAL EXPORT PROTEIN 1"/>
    <property type="match status" value="1"/>
</dbReference>
<dbReference type="Pfam" id="PF11654">
    <property type="entry name" value="NCE101"/>
    <property type="match status" value="1"/>
</dbReference>
<organism>
    <name type="scientific">Schizosaccharomyces pombe (strain 972 / ATCC 24843)</name>
    <name type="common">Fission yeast</name>
    <dbReference type="NCBI Taxonomy" id="284812"/>
    <lineage>
        <taxon>Eukaryota</taxon>
        <taxon>Fungi</taxon>
        <taxon>Dikarya</taxon>
        <taxon>Ascomycota</taxon>
        <taxon>Taphrinomycotina</taxon>
        <taxon>Schizosaccharomycetes</taxon>
        <taxon>Schizosaccharomycetales</taxon>
        <taxon>Schizosaccharomycetaceae</taxon>
        <taxon>Schizosaccharomyces</taxon>
    </lineage>
</organism>
<reference key="1">
    <citation type="journal article" date="2002" name="Nature">
        <title>The genome sequence of Schizosaccharomyces pombe.</title>
        <authorList>
            <person name="Wood V."/>
            <person name="Gwilliam R."/>
            <person name="Rajandream M.A."/>
            <person name="Lyne M.H."/>
            <person name="Lyne R."/>
            <person name="Stewart A."/>
            <person name="Sgouros J.G."/>
            <person name="Peat N."/>
            <person name="Hayles J."/>
            <person name="Baker S.G."/>
            <person name="Basham D."/>
            <person name="Bowman S."/>
            <person name="Brooks K."/>
            <person name="Brown D."/>
            <person name="Brown S."/>
            <person name="Chillingworth T."/>
            <person name="Churcher C.M."/>
            <person name="Collins M."/>
            <person name="Connor R."/>
            <person name="Cronin A."/>
            <person name="Davis P."/>
            <person name="Feltwell T."/>
            <person name="Fraser A."/>
            <person name="Gentles S."/>
            <person name="Goble A."/>
            <person name="Hamlin N."/>
            <person name="Harris D.E."/>
            <person name="Hidalgo J."/>
            <person name="Hodgson G."/>
            <person name="Holroyd S."/>
            <person name="Hornsby T."/>
            <person name="Howarth S."/>
            <person name="Huckle E.J."/>
            <person name="Hunt S."/>
            <person name="Jagels K."/>
            <person name="James K.D."/>
            <person name="Jones L."/>
            <person name="Jones M."/>
            <person name="Leather S."/>
            <person name="McDonald S."/>
            <person name="McLean J."/>
            <person name="Mooney P."/>
            <person name="Moule S."/>
            <person name="Mungall K.L."/>
            <person name="Murphy L.D."/>
            <person name="Niblett D."/>
            <person name="Odell C."/>
            <person name="Oliver K."/>
            <person name="O'Neil S."/>
            <person name="Pearson D."/>
            <person name="Quail M.A."/>
            <person name="Rabbinowitsch E."/>
            <person name="Rutherford K.M."/>
            <person name="Rutter S."/>
            <person name="Saunders D."/>
            <person name="Seeger K."/>
            <person name="Sharp S."/>
            <person name="Skelton J."/>
            <person name="Simmonds M.N."/>
            <person name="Squares R."/>
            <person name="Squares S."/>
            <person name="Stevens K."/>
            <person name="Taylor K."/>
            <person name="Taylor R.G."/>
            <person name="Tivey A."/>
            <person name="Walsh S.V."/>
            <person name="Warren T."/>
            <person name="Whitehead S."/>
            <person name="Woodward J.R."/>
            <person name="Volckaert G."/>
            <person name="Aert R."/>
            <person name="Robben J."/>
            <person name="Grymonprez B."/>
            <person name="Weltjens I."/>
            <person name="Vanstreels E."/>
            <person name="Rieger M."/>
            <person name="Schaefer M."/>
            <person name="Mueller-Auer S."/>
            <person name="Gabel C."/>
            <person name="Fuchs M."/>
            <person name="Duesterhoeft A."/>
            <person name="Fritzc C."/>
            <person name="Holzer E."/>
            <person name="Moestl D."/>
            <person name="Hilbert H."/>
            <person name="Borzym K."/>
            <person name="Langer I."/>
            <person name="Beck A."/>
            <person name="Lehrach H."/>
            <person name="Reinhardt R."/>
            <person name="Pohl T.M."/>
            <person name="Eger P."/>
            <person name="Zimmermann W."/>
            <person name="Wedler H."/>
            <person name="Wambutt R."/>
            <person name="Purnelle B."/>
            <person name="Goffeau A."/>
            <person name="Cadieu E."/>
            <person name="Dreano S."/>
            <person name="Gloux S."/>
            <person name="Lelaure V."/>
            <person name="Mottier S."/>
            <person name="Galibert F."/>
            <person name="Aves S.J."/>
            <person name="Xiang Z."/>
            <person name="Hunt C."/>
            <person name="Moore K."/>
            <person name="Hurst S.M."/>
            <person name="Lucas M."/>
            <person name="Rochet M."/>
            <person name="Gaillardin C."/>
            <person name="Tallada V.A."/>
            <person name="Garzon A."/>
            <person name="Thode G."/>
            <person name="Daga R.R."/>
            <person name="Cruzado L."/>
            <person name="Jimenez J."/>
            <person name="Sanchez M."/>
            <person name="del Rey F."/>
            <person name="Benito J."/>
            <person name="Dominguez A."/>
            <person name="Revuelta J.L."/>
            <person name="Moreno S."/>
            <person name="Armstrong J."/>
            <person name="Forsburg S.L."/>
            <person name="Cerutti L."/>
            <person name="Lowe T."/>
            <person name="McCombie W.R."/>
            <person name="Paulsen I."/>
            <person name="Potashkin J."/>
            <person name="Shpakovski G.V."/>
            <person name="Ussery D."/>
            <person name="Barrell B.G."/>
            <person name="Nurse P."/>
        </authorList>
    </citation>
    <scope>NUCLEOTIDE SEQUENCE [LARGE SCALE GENOMIC DNA]</scope>
    <source>
        <strain>972 / ATCC 24843</strain>
    </source>
</reference>
<reference key="2">
    <citation type="journal article" date="2008" name="Nature">
        <title>Dynamic repertoire of a eukaryotic transcriptome surveyed at single-nucleotide resolution.</title>
        <authorList>
            <person name="Wilhelm B.T."/>
            <person name="Marguerat S."/>
            <person name="Watt S."/>
            <person name="Schubert F."/>
            <person name="Wood V."/>
            <person name="Goodhead I."/>
            <person name="Penkett C.J."/>
            <person name="Rogers J."/>
            <person name="Baehler J."/>
        </authorList>
    </citation>
    <scope>IDENTIFICATION</scope>
</reference>
<keyword id="KW-0472">Membrane</keyword>
<keyword id="KW-0653">Protein transport</keyword>
<keyword id="KW-1185">Reference proteome</keyword>
<keyword id="KW-0812">Transmembrane</keyword>
<keyword id="KW-1133">Transmembrane helix</keyword>
<keyword id="KW-0813">Transport</keyword>